<organism>
    <name type="scientific">Human immunodeficiency virus type 1 group M subtype D (isolate Z84)</name>
    <name type="common">HIV-1</name>
    <dbReference type="NCBI Taxonomy" id="11681"/>
    <lineage>
        <taxon>Viruses</taxon>
        <taxon>Riboviria</taxon>
        <taxon>Pararnavirae</taxon>
        <taxon>Artverviricota</taxon>
        <taxon>Revtraviricetes</taxon>
        <taxon>Ortervirales</taxon>
        <taxon>Retroviridae</taxon>
        <taxon>Orthoretrovirinae</taxon>
        <taxon>Lentivirus</taxon>
        <taxon>Human immunodeficiency virus type 1</taxon>
    </lineage>
</organism>
<sequence>MRVMGIRMNYQHLWKWGIMLLGILMTCSVAEDLWVTVYYGVPVWKEATTTLFCASDAKSYEPEAHNIWATHACVPTDPNPREIEMENVTENFNMWKNNMVEQMHEDIISLWDQNLKPCVKLTPLCVTLNCTNAGGNKTTNGNNTTNQEEQMMEKGEMKNCSFNITTVISDKKKQVHALFYRLDVVPIDDDNSANTSNTNYTNYRLINCNTSAITQACPKVTFEPIPIHYCAPAGFAILKCKDKKFNGTGPCKKVSTVQCTHGIRPVVSTQLLLNGSLAEEEIIIRSENLTNNVKTIIVHLNESVEINCTRPDNKITRQSTPIGLGQALYTTRIKGDIRQAYCNISAAAWNKTLQQVAKKLGDLLNQTTIIFKPPAGGDPEITTHSFNCGGEFFYCNTSRLFNSTWNSSTWNNDTLNSEGTIKLPCRIKQIINMWQGVGKAMYAPPIEGLIKCTSNITGLLLTRDGGVNNSTNETFRPGGGDMKDNWRNELYKYKVVRIEPLGIAPTRAKRRVVEREKRAIGLGAVFLGFLGAAGSTMGAVSVALTGQARQLLSGIVQQQNNLLRAIEAQQHMLQLTVWGIKQLQARVLAVESYLKDQQLLGIWGCSGKHICTTTVPWNSSWSNKSLEEIWNNMTWIEWEREIDNYTGVIYSLIENSQIQQEKNEQDLLQLDKWASLWNWFSITKWLWYIKIFIMIVGGLIGLRIVFTVLSLVNRVRQGYSPLSFQTLLPAPRGPDRPEGIEEEGGEQGRDRSIRLVNGFSALFWDDLRNLCLFSYHRLRDLILIATRIVELLGRRGWEAIKYLWSLLQYWTQELKNSFISLLNATAIAVAEGTDRIIELIRRAFRAVLHIPRRVRQGLERALL</sequence>
<gene>
    <name evidence="1" type="primary">env</name>
</gene>
<name>ENV_HV1Z8</name>
<accession>P05882</accession>
<dbReference type="EMBL" id="J03653">
    <property type="protein sequence ID" value="AAA44684.1"/>
    <property type="molecule type" value="Genomic_RNA"/>
</dbReference>
<dbReference type="SMR" id="P05882"/>
<dbReference type="GlyCosmos" id="P05882">
    <property type="glycosylation" value="30 sites, No reported glycans"/>
</dbReference>
<dbReference type="Reactome" id="R-HSA-5621480">
    <property type="pathway name" value="Dectin-2 family"/>
</dbReference>
<dbReference type="GO" id="GO:0044175">
    <property type="term" value="C:host cell endosome membrane"/>
    <property type="evidence" value="ECO:0007669"/>
    <property type="project" value="UniProtKB-SubCell"/>
</dbReference>
<dbReference type="GO" id="GO:0020002">
    <property type="term" value="C:host cell plasma membrane"/>
    <property type="evidence" value="ECO:0007669"/>
    <property type="project" value="UniProtKB-SubCell"/>
</dbReference>
<dbReference type="GO" id="GO:0016020">
    <property type="term" value="C:membrane"/>
    <property type="evidence" value="ECO:0007669"/>
    <property type="project" value="UniProtKB-UniRule"/>
</dbReference>
<dbReference type="GO" id="GO:0019031">
    <property type="term" value="C:viral envelope"/>
    <property type="evidence" value="ECO:0007669"/>
    <property type="project" value="UniProtKB-KW"/>
</dbReference>
<dbReference type="GO" id="GO:0055036">
    <property type="term" value="C:virion membrane"/>
    <property type="evidence" value="ECO:0007669"/>
    <property type="project" value="UniProtKB-SubCell"/>
</dbReference>
<dbReference type="GO" id="GO:0005198">
    <property type="term" value="F:structural molecule activity"/>
    <property type="evidence" value="ECO:0007669"/>
    <property type="project" value="UniProtKB-UniRule"/>
</dbReference>
<dbReference type="GO" id="GO:0075512">
    <property type="term" value="P:clathrin-dependent endocytosis of virus by host cell"/>
    <property type="evidence" value="ECO:0007669"/>
    <property type="project" value="UniProtKB-UniRule"/>
</dbReference>
<dbReference type="GO" id="GO:0039654">
    <property type="term" value="P:fusion of virus membrane with host endosome membrane"/>
    <property type="evidence" value="ECO:0007669"/>
    <property type="project" value="UniProtKB-UniRule"/>
</dbReference>
<dbReference type="GO" id="GO:0019064">
    <property type="term" value="P:fusion of virus membrane with host plasma membrane"/>
    <property type="evidence" value="ECO:0007669"/>
    <property type="project" value="UniProtKB-UniRule"/>
</dbReference>
<dbReference type="GO" id="GO:1903908">
    <property type="term" value="P:positive regulation of plasma membrane raft polarization"/>
    <property type="evidence" value="ECO:0007669"/>
    <property type="project" value="UniProtKB-UniRule"/>
</dbReference>
<dbReference type="GO" id="GO:1903911">
    <property type="term" value="P:positive regulation of receptor clustering"/>
    <property type="evidence" value="ECO:0007669"/>
    <property type="project" value="UniProtKB-UniRule"/>
</dbReference>
<dbReference type="GO" id="GO:0019082">
    <property type="term" value="P:viral protein processing"/>
    <property type="evidence" value="ECO:0007669"/>
    <property type="project" value="UniProtKB-UniRule"/>
</dbReference>
<dbReference type="GO" id="GO:0019062">
    <property type="term" value="P:virion attachment to host cell"/>
    <property type="evidence" value="ECO:0007669"/>
    <property type="project" value="UniProtKB-UniRule"/>
</dbReference>
<dbReference type="CDD" id="cd09909">
    <property type="entry name" value="HIV-1-like_HR1-HR2"/>
    <property type="match status" value="1"/>
</dbReference>
<dbReference type="FunFam" id="1.10.287.210:FF:000001">
    <property type="entry name" value="Envelope glycoprotein gp160"/>
    <property type="match status" value="1"/>
</dbReference>
<dbReference type="FunFam" id="1.20.5.490:FF:000001">
    <property type="entry name" value="Envelope glycoprotein gp160"/>
    <property type="match status" value="1"/>
</dbReference>
<dbReference type="FunFam" id="2.170.40.20:FF:000002">
    <property type="entry name" value="Envelope glycoprotein gp160"/>
    <property type="match status" value="1"/>
</dbReference>
<dbReference type="FunFam" id="2.170.40.20:FF:000003">
    <property type="entry name" value="Envelope glycoprotein gp160"/>
    <property type="match status" value="1"/>
</dbReference>
<dbReference type="Gene3D" id="1.10.287.210">
    <property type="match status" value="1"/>
</dbReference>
<dbReference type="Gene3D" id="2.170.40.20">
    <property type="entry name" value="Human immunodeficiency virus 1, Gp160, envelope glycoprotein"/>
    <property type="match status" value="2"/>
</dbReference>
<dbReference type="Gene3D" id="1.20.5.490">
    <property type="entry name" value="Single helix bin"/>
    <property type="match status" value="1"/>
</dbReference>
<dbReference type="HAMAP" id="MF_04083">
    <property type="entry name" value="HIV_ENV"/>
    <property type="match status" value="1"/>
</dbReference>
<dbReference type="InterPro" id="IPR036377">
    <property type="entry name" value="Gp120_core_sf"/>
</dbReference>
<dbReference type="InterPro" id="IPR037527">
    <property type="entry name" value="Gp160"/>
</dbReference>
<dbReference type="InterPro" id="IPR000328">
    <property type="entry name" value="GP41-like"/>
</dbReference>
<dbReference type="InterPro" id="IPR000777">
    <property type="entry name" value="HIV1_Gp120"/>
</dbReference>
<dbReference type="Pfam" id="PF00516">
    <property type="entry name" value="GP120"/>
    <property type="match status" value="1"/>
</dbReference>
<dbReference type="Pfam" id="PF00517">
    <property type="entry name" value="GP41"/>
    <property type="match status" value="1"/>
</dbReference>
<dbReference type="SUPFAM" id="SSF56502">
    <property type="entry name" value="gp120 core"/>
    <property type="match status" value="2"/>
</dbReference>
<dbReference type="SUPFAM" id="SSF58069">
    <property type="entry name" value="Virus ectodomain"/>
    <property type="match status" value="1"/>
</dbReference>
<reference key="1">
    <citation type="journal article" date="1988" name="AIDS Res. Hum. Retroviruses">
        <title>Nucleotide sequence analysis of the env gene of a new Zairian isolate of HIV-1.</title>
        <authorList>
            <person name="Yourno J."/>
            <person name="Josephs S.F."/>
            <person name="Reitz M.S. Jr."/>
            <person name="Zagury D."/>
            <person name="Wong-Staal F."/>
            <person name="Gallo R.C."/>
        </authorList>
    </citation>
    <scope>NUCLEOTIDE SEQUENCE [GENOMIC RNA]</scope>
</reference>
<reference key="2">
    <citation type="journal article" date="2003" name="APMIS">
        <title>Pathogens target DC-SIGN to influence their fate DC-SIGN functions as a pathogen receptor with broad specificity.</title>
        <authorList>
            <person name="Geijtenbeek T.B."/>
            <person name="van Kooyk Y."/>
        </authorList>
    </citation>
    <scope>REVIEW</scope>
</reference>
<reference key="3">
    <citation type="journal article" date="2003" name="Biochim. Biophys. Acta">
        <title>The HIV Env-mediated fusion reaction.</title>
        <authorList>
            <person name="Gallo S.A."/>
            <person name="Finnegan C.M."/>
            <person name="Viard M."/>
            <person name="Raviv Y."/>
            <person name="Dimitrov A."/>
            <person name="Rawat S.S."/>
            <person name="Puri A."/>
            <person name="Durell S."/>
            <person name="Blumenthal R."/>
        </authorList>
    </citation>
    <scope>REVIEW</scope>
</reference>
<reference key="4">
    <citation type="journal article" date="2005" name="Cell Death Differ.">
        <title>Mechanisms of apoptosis induction by the HIV-1 envelope.</title>
        <authorList>
            <person name="Perfettini J.-L."/>
            <person name="Castedo M."/>
            <person name="Roumier T."/>
            <person name="Andreau K."/>
            <person name="Nardacci R."/>
            <person name="Piacentini M."/>
            <person name="Kroemer G."/>
        </authorList>
    </citation>
    <scope>REVIEW</scope>
</reference>
<reference key="5">
    <citation type="journal article" date="2005" name="AIDS Res. Hum. Retroviruses">
        <title>V3: HIV's switch-hitter.</title>
        <authorList>
            <person name="Hartley O."/>
            <person name="Klasse P.J."/>
            <person name="Sattentau Q.J."/>
            <person name="Moore J.P."/>
        </authorList>
    </citation>
    <scope>REVIEW</scope>
</reference>
<reference key="6">
    <citation type="journal article" date="2005" name="Drugs">
        <title>Emerging drug targets for antiretroviral therapy.</title>
        <authorList>
            <person name="Reeves J.D."/>
            <person name="Piefer A.J."/>
        </authorList>
    </citation>
    <scope>REVIEW</scope>
</reference>
<reference key="7">
    <citation type="journal article" date="2006" name="EMBO J.">
        <title>HIV and the chemokine system: 10 years later.</title>
        <authorList>
            <person name="Lusso P."/>
        </authorList>
    </citation>
    <scope>REVIEW</scope>
</reference>
<organismHost>
    <name type="scientific">Homo sapiens</name>
    <name type="common">Human</name>
    <dbReference type="NCBI Taxonomy" id="9606"/>
</organismHost>
<keyword id="KW-0014">AIDS</keyword>
<keyword id="KW-0053">Apoptosis</keyword>
<keyword id="KW-1165">Clathrin-mediated endocytosis of virus by host</keyword>
<keyword id="KW-0165">Cleavage on pair of basic residues</keyword>
<keyword id="KW-0175">Coiled coil</keyword>
<keyword id="KW-1015">Disulfide bond</keyword>
<keyword id="KW-1170">Fusion of virus membrane with host endosomal membrane</keyword>
<keyword id="KW-1168">Fusion of virus membrane with host membrane</keyword>
<keyword id="KW-0325">Glycoprotein</keyword>
<keyword id="KW-1032">Host cell membrane</keyword>
<keyword id="KW-1039">Host endosome</keyword>
<keyword id="KW-1043">Host membrane</keyword>
<keyword id="KW-0945">Host-virus interaction</keyword>
<keyword id="KW-0449">Lipoprotein</keyword>
<keyword id="KW-0472">Membrane</keyword>
<keyword id="KW-0564">Palmitate</keyword>
<keyword id="KW-0732">Signal</keyword>
<keyword id="KW-0812">Transmembrane</keyword>
<keyword id="KW-1133">Transmembrane helix</keyword>
<keyword id="KW-1161">Viral attachment to host cell</keyword>
<keyword id="KW-0261">Viral envelope protein</keyword>
<keyword id="KW-0899">Viral immunoevasion</keyword>
<keyword id="KW-1162">Viral penetration into host cytoplasm</keyword>
<keyword id="KW-0946">Virion</keyword>
<keyword id="KW-1164">Virus endocytosis by host</keyword>
<keyword id="KW-1160">Virus entry into host cell</keyword>
<evidence type="ECO:0000255" key="1">
    <source>
        <dbReference type="HAMAP-Rule" id="MF_04083"/>
    </source>
</evidence>
<evidence type="ECO:0000256" key="2">
    <source>
        <dbReference type="SAM" id="MobiDB-lite"/>
    </source>
</evidence>
<comment type="function">
    <molecule>Envelope glycoprotein gp160</molecule>
    <text evidence="1">Oligomerizes in the host endoplasmic reticulum into predominantly trimers. In a second time, gp160 transits in the host Golgi, where glycosylation is completed. The precursor is then proteolytically cleaved in the trans-Golgi and thereby activated by cellular furin or furin-like proteases to produce gp120 and gp41.</text>
</comment>
<comment type="function">
    <molecule>Surface protein gp120</molecule>
    <text evidence="1">Attaches the virus to the host lymphoid cell by binding to the primary receptor CD4. This interaction induces a structural rearrangement creating a high affinity binding site for a chemokine coreceptor like CXCR4 and/or CCR5. Acts as a ligand for CD209/DC-SIGN and CLEC4M/DC-SIGNR, which are respectively found on dendritic cells (DCs), and on endothelial cells of liver sinusoids and lymph node sinuses. These interactions allow capture of viral particles at mucosal surfaces by these cells and subsequent transmission to permissive cells. HIV subverts the migration properties of dendritic cells to gain access to CD4+ T-cells in lymph nodes. Virus transmission to permissive T-cells occurs either in trans (without DCs infection, through viral capture and transmission), or in cis (following DCs productive infection, through the usual CD4-gp120 interaction), thereby inducing a robust infection. In trans infection, bound virions remain infectious over days and it is proposed that they are not degraded, but protected in non-lysosomal acidic organelles within the DCs close to the cell membrane thus contributing to the viral infectious potential during DCs' migration from the periphery to the lymphoid tissues. On arrival at lymphoid tissues, intact virions recycle back to DCs' cell surface allowing virus transmission to CD4+ T-cells.</text>
</comment>
<comment type="function">
    <molecule>Transmembrane protein gp41</molecule>
    <text evidence="1">Acts as a class I viral fusion protein. Under the current model, the protein has at least 3 conformational states: pre-fusion native state, pre-hairpin intermediate state, and post-fusion hairpin state. During fusion of viral and target intracellular membranes, the coiled coil regions (heptad repeats) assume a trimer-of-hairpins structure, positioning the fusion peptide in close proximity to the C-terminal region of the ectodomain. The formation of this structure appears to drive apposition and subsequent fusion of viral and target cell membranes. Complete fusion occurs in host cell endosomes and is dynamin-dependent, however some lipid transfer might occur at the plasma membrane. The virus undergoes clathrin-dependent internalization long before endosomal fusion, thus minimizing the surface exposure of conserved viral epitopes during fusion and reducing the efficacy of inhibitors targeting these epitopes. Membranes fusion leads to delivery of the nucleocapsid into the cytoplasm.</text>
</comment>
<comment type="subunit">
    <molecule>Surface protein gp120</molecule>
    <text evidence="1">The mature envelope protein (Env) consists of a homotrimer of non-covalently associated gp120-gp41 heterodimers. The resulting complex protrudes from the virus surface as a spike. There seems to be as few as 10 spikes on the average virion. Interacts with host CD4, CCR5 and CXCR4. Gp120 also interacts with the C-type lectins CD209/DC-SIGN and CLEC4M/DC-SIGNR (collectively referred to as DC-SIGN(R)). Gp120 and gp41 interact with GalCer. Gp120 interacts with host ITGA4/ITGB7 complex; on CD4+ T-cells, this interaction results in rapid activation of integrin ITGAL/LFA-1, which facilitates efficient cell-to-cell spreading of HIV-1. Gp120 interacts with cell-associated heparan sulfate; this interaction increases virus infectivity on permissive cells and may be involved in infection of CD4- cells.</text>
</comment>
<comment type="subunit">
    <molecule>Transmembrane protein gp41</molecule>
    <text evidence="1">The mature envelope protein (Env) consists of a homotrimer of non-covalently associated gp120-gp41 heterodimers. The resulting complex protrudes from the virus surface as a spike. There seems to be as few as 10 spikes on the average virion.</text>
</comment>
<comment type="subcellular location">
    <molecule>Surface protein gp120</molecule>
    <subcellularLocation>
        <location evidence="1">Virion membrane</location>
        <topology evidence="1">Peripheral membrane protein</topology>
    </subcellularLocation>
    <subcellularLocation>
        <location evidence="1">Host cell membrane</location>
        <topology evidence="1">Peripheral membrane protein</topology>
    </subcellularLocation>
    <subcellularLocation>
        <location evidence="1">Host endosome membrane</location>
        <topology evidence="1">Single-pass type I membrane protein</topology>
    </subcellularLocation>
    <text evidence="1">The surface protein is not anchored to the viral envelope, but associates with the extravirion surface through its binding to TM. It is probably concentrated at the site of budding and incorporated into the virions possibly by contacts between the cytoplasmic tail of Env and the N-terminus of Gag.</text>
</comment>
<comment type="subcellular location">
    <molecule>Transmembrane protein gp41</molecule>
    <subcellularLocation>
        <location evidence="1">Virion membrane</location>
        <topology evidence="1">Single-pass type I membrane protein</topology>
    </subcellularLocation>
    <subcellularLocation>
        <location evidence="1">Host cell membrane</location>
        <topology evidence="1">Single-pass type I membrane protein</topology>
    </subcellularLocation>
    <subcellularLocation>
        <location evidence="1">Host endosome membrane</location>
        <topology evidence="1">Single-pass type I membrane protein</topology>
    </subcellularLocation>
    <text evidence="1">It is probably concentrated at the site of budding and incorporated into the virions possibly by contacts between the cytoplasmic tail of Env and the N-terminus of Gag.</text>
</comment>
<comment type="domain">
    <text evidence="1">Some of the most genetically diverse regions of the viral genome are present in Env. They are called variable regions 1 through 5 (V1 through V5). Coreceptor usage of gp120 is determined mainly by the primary structure of the third variable region (V3) in the outer domain of gp120. The sequence of V3 determines which coreceptor, CCR5 and/or CXCR4 (corresponding to R5/macrophage, X4/T cell and R5X4/T cell and macrophage tropism), is used to trigger the fusion potential of the Env complex, and hence which cells the virus can infect. Binding to CCR5 involves a region adjacent in addition to V3.</text>
</comment>
<comment type="domain">
    <text evidence="1">The membrane proximal external region (MPER) present in gp41 is a tryptophan-rich region recognized by the antibodies 2F5, Z13, and 4E10. MPER seems to play a role in fusion.</text>
</comment>
<comment type="domain">
    <text evidence="1">The 17 amino acids long immunosuppressive region is present in many retroviral envelope proteins. Synthetic peptides derived from this relatively conserved sequence inhibit immune function in vitro and in vivo.</text>
</comment>
<comment type="domain">
    <text evidence="1">The YXXL motif is involved in determining the exact site of viral release at the surface of infected mononuclear cells and promotes endocytosis. YXXL and di-leucine endocytosis motifs interact directly or indirectly with the clathrin adapter complexes, opperate independently, and their activities are not additive.</text>
</comment>
<comment type="domain">
    <text evidence="1">The CD4-binding region is targeted by the antibody b12.</text>
</comment>
<comment type="PTM">
    <text evidence="1">Highly glycosylated by host. The high number of glycan on the protein is reffered to as 'glycan shield' because it contributes to hide protein sequence from adaptive immune system.</text>
</comment>
<comment type="PTM">
    <text evidence="1">Palmitoylation of the transmembrane protein and of Env polyprotein (prior to its proteolytic cleavage) is essential for their association with host cell membrane lipid rafts. Palmitoylation is therefore required for envelope trafficking to classical lipid rafts, but not for viral replication.</text>
</comment>
<comment type="PTM">
    <text evidence="1">Specific enzymatic cleavages in vivo yield mature proteins. Envelope glycoproteins are synthesized as an inactive precursor that is heavily N-glycosylated and processed likely by host cell furin in the Golgi to yield the mature SU and TM proteins. The cleavage site between SU and TM requires the minimal sequence [KR]-X-[KR]-R. About 2 of the 9 disulfide bonds of gp41 are reduced by P4HB/PDI, following binding to CD4 receptor.</text>
</comment>
<comment type="miscellaneous">
    <text evidence="1">Inhibitors targeting HIV-1 viral envelope proteins are used as antiretroviral drugs. Attachment of virions to the cell surface via non-specific interactions and CD4 binding can be blocked by inhibitors that include cyanovirin-N, cyclotriazadisulfonamide analogs, PRO 2000, TNX 355 and PRO 542. In addition, BMS 806 can block CD4-induced conformational changes. Env interactions with the coreceptor molecules can be targeted by CCR5 antagonists including SCH-D, maraviroc (UK 427857) and aplaviroc (GW 873140), and the CXCR4 antagonist AMD 070. Fusion of viral and cellular membranes can be inhibited by peptides such as enfuvirtide and tifuvirtide (T 1249). Resistance to inhibitors associated with mutations in Env are observed. Most of the time, single mutations confer only a modest reduction in drug susceptibility. Combination of several mutations is usually required to develop a high-level drug resistance.</text>
</comment>
<comment type="miscellaneous">
    <text evidence="1">HIV-1 lineages are divided in three main groups, M (for Major), O (for Outlier), and N (for New, or Non-M, Non-O). The vast majority of strains found worldwide belong to the group M. Group O seems to be endemic to and largely confined to Cameroon and neighboring countries in West Central Africa, where these viruses represent a small minority of HIV-1 strains. The group N is represented by a limited number of isolates from Cameroonian persons. The group M is further subdivided in 9 clades or subtypes (A to D, F to H, J and K).</text>
</comment>
<comment type="similarity">
    <text evidence="1">Belongs to the HIV-1 env protein family.</text>
</comment>
<comment type="online information" name="hivdb">
    <link uri="https://hivdb.stanford.edu"/>
    <text>HIV drug resistance database</text>
</comment>
<comment type="online information" name="HIV drug resistance mutations">
    <link uri="https://www.iasusa.org/hiv-drug-resistance/hiv-drug-resistance-mutations/"/>
</comment>
<protein>
    <recommendedName>
        <fullName evidence="1">Envelope glycoprotein gp160</fullName>
    </recommendedName>
    <alternativeName>
        <fullName evidence="1">Env polyprotein</fullName>
    </alternativeName>
    <component>
        <recommendedName>
            <fullName evidence="1">Surface protein gp120</fullName>
            <shortName evidence="1">SU</shortName>
        </recommendedName>
        <alternativeName>
            <fullName evidence="1">Glycoprotein 120</fullName>
            <shortName evidence="1">gp120</shortName>
        </alternativeName>
    </component>
    <component>
        <recommendedName>
            <fullName evidence="1">Transmembrane protein gp41</fullName>
            <shortName evidence="1">TM</shortName>
        </recommendedName>
        <alternativeName>
            <fullName evidence="1">Glycoprotein 41</fullName>
            <shortName evidence="1">gp41</shortName>
        </alternativeName>
    </component>
</protein>
<feature type="signal peptide" evidence="1">
    <location>
        <begin position="1"/>
        <end position="31"/>
    </location>
</feature>
<feature type="chain" id="PRO_0000239470" description="Envelope glycoprotein gp160" evidence="1">
    <location>
        <begin position="32"/>
        <end position="863"/>
    </location>
</feature>
<feature type="chain" id="PRO_0000038380" description="Surface protein gp120" evidence="1">
    <location>
        <begin position="32"/>
        <end position="518"/>
    </location>
</feature>
<feature type="chain" id="PRO_0000038381" description="Transmembrane protein gp41" evidence="1">
    <location>
        <begin position="519"/>
        <end position="863"/>
    </location>
</feature>
<feature type="topological domain" description="Extracellular" evidence="1">
    <location>
        <begin position="32"/>
        <end position="691"/>
    </location>
</feature>
<feature type="transmembrane region" description="Helical" evidence="1">
    <location>
        <begin position="692"/>
        <end position="712"/>
    </location>
</feature>
<feature type="topological domain" description="Cytoplasmic" evidence="1">
    <location>
        <begin position="713"/>
        <end position="863"/>
    </location>
</feature>
<feature type="region of interest" description="V1" evidence="1">
    <location>
        <begin position="130"/>
        <end position="159"/>
    </location>
</feature>
<feature type="region of interest" description="V2" evidence="1">
    <location>
        <begin position="160"/>
        <end position="208"/>
    </location>
</feature>
<feature type="region of interest" description="V3" evidence="1">
    <location>
        <begin position="308"/>
        <end position="341"/>
    </location>
</feature>
<feature type="region of interest" description="CD4-binding loop" evidence="1">
    <location>
        <begin position="374"/>
        <end position="384"/>
    </location>
</feature>
<feature type="region of interest" description="V4" evidence="1">
    <location>
        <begin position="395"/>
        <end position="425"/>
    </location>
</feature>
<feature type="region of interest" description="V5">
    <location>
        <begin position="467"/>
        <end position="478"/>
    </location>
</feature>
<feature type="region of interest" description="V5" evidence="1">
    <location>
        <begin position="470"/>
        <end position="478"/>
    </location>
</feature>
<feature type="region of interest" description="Fusion peptide" evidence="1">
    <location>
        <begin position="519"/>
        <end position="539"/>
    </location>
</feature>
<feature type="region of interest" description="Immunosuppression" evidence="1">
    <location>
        <begin position="581"/>
        <end position="599"/>
    </location>
</feature>
<feature type="region of interest" description="MPER; binding to GalCer" evidence="1">
    <location>
        <begin position="669"/>
        <end position="690"/>
    </location>
</feature>
<feature type="region of interest" description="Disordered" evidence="2">
    <location>
        <begin position="729"/>
        <end position="748"/>
    </location>
</feature>
<feature type="coiled-coil region" evidence="1">
    <location>
        <begin position="640"/>
        <end position="674"/>
    </location>
</feature>
<feature type="short sequence motif" description="YXXL motif; contains endocytosis signal" evidence="1">
    <location>
        <begin position="719"/>
        <end position="722"/>
    </location>
</feature>
<feature type="short sequence motif" description="Di-leucine internalization motif" evidence="1">
    <location>
        <begin position="862"/>
        <end position="863"/>
    </location>
</feature>
<feature type="site" description="Cleavage; by host furin" evidence="1">
    <location>
        <begin position="518"/>
        <end position="519"/>
    </location>
</feature>
<feature type="lipid moiety-binding region" description="S-palmitoyl cysteine; by host" evidence="1">
    <location>
        <position position="771"/>
    </location>
</feature>
<feature type="glycosylation site" description="N-linked (GlcNAc...) asparagine; by host" evidence="1">
    <location>
        <position position="87"/>
    </location>
</feature>
<feature type="glycosylation site" description="N-linked (GlcNAc...) asparagine; by host" evidence="1">
    <location>
        <position position="129"/>
    </location>
</feature>
<feature type="glycosylation site" description="N-linked (GlcNAc...) asparagine; by host" evidence="1">
    <location>
        <position position="136"/>
    </location>
</feature>
<feature type="glycosylation site" description="N-linked (GlcNAc...) asparagine; by host" evidence="1">
    <location>
        <position position="142"/>
    </location>
</feature>
<feature type="glycosylation site" description="N-linked (GlcNAc...) asparagine; by host" evidence="1">
    <location>
        <position position="143"/>
    </location>
</feature>
<feature type="glycosylation site" description="N-linked (GlcNAc...) asparagine; by host" evidence="1">
    <location>
        <position position="159"/>
    </location>
</feature>
<feature type="glycosylation site" description="N-linked (GlcNAc...) asparagine; by host" evidence="1">
    <location>
        <position position="163"/>
    </location>
</feature>
<feature type="glycosylation site" description="N-linked (GlcNAc...) asparagine; by host" evidence="1">
    <location>
        <position position="194"/>
    </location>
</feature>
<feature type="glycosylation site" description="N-linked (GlcNAc...) asparagine; by host" evidence="1">
    <location>
        <position position="199"/>
    </location>
</feature>
<feature type="glycosylation site" description="N-linked (GlcNAc...) asparagine; by host" evidence="1">
    <location>
        <position position="209"/>
    </location>
</feature>
<feature type="glycosylation site" description="N-linked (GlcNAc...) asparagine; by host" evidence="1">
    <location>
        <position position="246"/>
    </location>
</feature>
<feature type="glycosylation site" description="N-linked (GlcNAc...) asparagine; by host" evidence="1">
    <location>
        <position position="274"/>
    </location>
</feature>
<feature type="glycosylation site" description="N-linked (GlcNAc...) asparagine; by host" evidence="1">
    <location>
        <position position="288"/>
    </location>
</feature>
<feature type="glycosylation site" description="N-linked (GlcNAc...) asparagine; by host" evidence="1">
    <location>
        <position position="301"/>
    </location>
</feature>
<feature type="glycosylation site" description="N-linked (GlcNAc...) asparagine; by host" evidence="1">
    <location>
        <position position="307"/>
    </location>
</feature>
<feature type="glycosylation site" description="N-linked (GlcNAc...) asparagine; by host" evidence="1">
    <location>
        <position position="343"/>
    </location>
</feature>
<feature type="glycosylation site" description="N-linked (GlcNAc...) asparagine; by host" evidence="1">
    <location>
        <position position="350"/>
    </location>
</feature>
<feature type="glycosylation site" description="N-linked (GlcNAc...) asparagine; by host" evidence="1">
    <location>
        <position position="365"/>
    </location>
</feature>
<feature type="glycosylation site" description="N-linked (GlcNAc...) asparagine; by host" evidence="1">
    <location>
        <position position="396"/>
    </location>
</feature>
<feature type="glycosylation site" description="N-linked (GlcNAc...) asparagine; by host" evidence="1">
    <location>
        <position position="402"/>
    </location>
</feature>
<feature type="glycosylation site" description="N-linked (GlcNAc...) asparagine; by host" evidence="1">
    <location>
        <position position="406"/>
    </location>
</feature>
<feature type="glycosylation site" description="N-linked (GlcNAc...) asparagine; by host" evidence="1">
    <location>
        <position position="412"/>
    </location>
</feature>
<feature type="glycosylation site" description="N-linked (GlcNAc...) asparagine; by host" evidence="1">
    <location>
        <position position="455"/>
    </location>
</feature>
<feature type="glycosylation site" description="N-linked (GlcNAc...) asparagine; by host" evidence="1">
    <location>
        <position position="468"/>
    </location>
</feature>
<feature type="glycosylation site" description="N-linked (GlcNAc...) asparagine; by host" evidence="1">
    <location>
        <position position="469"/>
    </location>
</feature>
<feature type="glycosylation site" description="N-linked (GlcNAc...) asparagine; by host" evidence="1">
    <location>
        <position position="472"/>
    </location>
</feature>
<feature type="glycosylation site" description="N-linked (GlcNAc...) asparagine; by host" evidence="1">
    <location>
        <position position="618"/>
    </location>
</feature>
<feature type="glycosylation site" description="N-linked (GlcNAc...) asparagine; by host" evidence="1">
    <location>
        <position position="623"/>
    </location>
</feature>
<feature type="glycosylation site" description="N-linked (GlcNAc...) asparagine; by host" evidence="1">
    <location>
        <position position="632"/>
    </location>
</feature>
<feature type="glycosylation site" description="N-linked (GlcNAc...) asparagine; by host" evidence="1">
    <location>
        <position position="644"/>
    </location>
</feature>
<feature type="disulfide bond" evidence="1">
    <location>
        <begin position="53"/>
        <end position="73"/>
    </location>
</feature>
<feature type="disulfide bond" evidence="1">
    <location>
        <begin position="118"/>
        <end position="217"/>
    </location>
</feature>
<feature type="disulfide bond" evidence="1">
    <location>
        <begin position="125"/>
        <end position="208"/>
    </location>
</feature>
<feature type="disulfide bond" evidence="1">
    <location>
        <begin position="130"/>
        <end position="160"/>
    </location>
</feature>
<feature type="disulfide bond" evidence="1">
    <location>
        <begin position="230"/>
        <end position="259"/>
    </location>
</feature>
<feature type="disulfide bond" evidence="1">
    <location>
        <begin position="240"/>
        <end position="251"/>
    </location>
</feature>
<feature type="disulfide bond" evidence="1">
    <location>
        <begin position="308"/>
        <end position="342"/>
    </location>
</feature>
<feature type="disulfide bond" evidence="1">
    <location>
        <begin position="388"/>
        <end position="452"/>
    </location>
</feature>
<feature type="disulfide bond" evidence="1">
    <location>
        <begin position="395"/>
        <end position="425"/>
    </location>
</feature>
<feature type="disulfide bond" evidence="1">
    <location>
        <begin position="605"/>
        <end position="611"/>
    </location>
</feature>
<proteinExistence type="inferred from homology"/>